<reference key="1">
    <citation type="journal article" date="1993" name="Gene">
        <title>Analysis of the nucleotide and derived amino acid sequences of the SsoII restriction endonuclease and methyltransferase.</title>
        <authorList>
            <person name="Karyagina A.S."/>
            <person name="Lunin V.G."/>
            <person name="Degtyarenko K.N."/>
            <person name="Uvarov V.Y."/>
            <person name="Nikolskaya I.I."/>
        </authorList>
    </citation>
    <scope>NUCLEOTIDE SEQUENCE [GENOMIC DNA]</scope>
    <source>
        <strain>47</strain>
    </source>
</reference>
<reference key="2">
    <citation type="journal article" date="2003" name="Nucleic Acids Res.">
        <title>A nomenclature for restriction enzymes, DNA methyltransferases, homing endonucleases and their genes.</title>
        <authorList>
            <person name="Roberts R.J."/>
            <person name="Belfort M."/>
            <person name="Bestor T."/>
            <person name="Bhagwat A.S."/>
            <person name="Bickle T.A."/>
            <person name="Bitinaite J."/>
            <person name="Blumenthal R.M."/>
            <person name="Degtyarev S.K."/>
            <person name="Dryden D.T."/>
            <person name="Dybvig K."/>
            <person name="Firman K."/>
            <person name="Gromova E.S."/>
            <person name="Gumport R.I."/>
            <person name="Halford S.E."/>
            <person name="Hattman S."/>
            <person name="Heitman J."/>
            <person name="Hornby D.P."/>
            <person name="Janulaitis A."/>
            <person name="Jeltsch A."/>
            <person name="Josephsen J."/>
            <person name="Kiss A."/>
            <person name="Klaenhammer T.R."/>
            <person name="Kobayashi I."/>
            <person name="Kong H."/>
            <person name="Krueger D.H."/>
            <person name="Lacks S."/>
            <person name="Marinus M.G."/>
            <person name="Miyahara M."/>
            <person name="Morgan R.D."/>
            <person name="Murray N.E."/>
            <person name="Nagaraja V."/>
            <person name="Piekarowicz A."/>
            <person name="Pingoud A."/>
            <person name="Raleigh E."/>
            <person name="Rao D.N."/>
            <person name="Reich N."/>
            <person name="Repin V.E."/>
            <person name="Selker E.U."/>
            <person name="Shaw P.C."/>
            <person name="Stein D.C."/>
            <person name="Stoddard B.L."/>
            <person name="Szybalski W."/>
            <person name="Trautner T.A."/>
            <person name="Van Etten J.L."/>
            <person name="Vitor J.M."/>
            <person name="Wilson G.G."/>
            <person name="Xu S.Y."/>
        </authorList>
    </citation>
    <scope>NOMENCLATURE</scope>
</reference>
<proteinExistence type="inferred from homology"/>
<geneLocation type="plasmid">
    <name>P4</name>
</geneLocation>
<dbReference type="EC" id="2.1.1.37"/>
<dbReference type="EMBL" id="M86545">
    <property type="protein sequence ID" value="AAA98279.1"/>
    <property type="molecule type" value="Genomic_DNA"/>
</dbReference>
<dbReference type="PIR" id="JT0744">
    <property type="entry name" value="JT0744"/>
</dbReference>
<dbReference type="RefSeq" id="WP_000131511.1">
    <property type="nucleotide sequence ID" value="NZ_CP151306.1"/>
</dbReference>
<dbReference type="SASBDB" id="P34879"/>
<dbReference type="SMR" id="P34879"/>
<dbReference type="REBASE" id="3509">
    <property type="entry name" value="M.SsoII"/>
</dbReference>
<dbReference type="BRENDA" id="2.1.1.37">
    <property type="organism ID" value="5713"/>
</dbReference>
<dbReference type="PRO" id="PR:P34879"/>
<dbReference type="GO" id="GO:0003886">
    <property type="term" value="F:DNA (cytosine-5-)-methyltransferase activity"/>
    <property type="evidence" value="ECO:0007669"/>
    <property type="project" value="UniProtKB-EC"/>
</dbReference>
<dbReference type="GO" id="GO:0003677">
    <property type="term" value="F:DNA binding"/>
    <property type="evidence" value="ECO:0007669"/>
    <property type="project" value="UniProtKB-KW"/>
</dbReference>
<dbReference type="GO" id="GO:0009307">
    <property type="term" value="P:DNA restriction-modification system"/>
    <property type="evidence" value="ECO:0007669"/>
    <property type="project" value="UniProtKB-KW"/>
</dbReference>
<dbReference type="GO" id="GO:0032259">
    <property type="term" value="P:methylation"/>
    <property type="evidence" value="ECO:0007669"/>
    <property type="project" value="UniProtKB-KW"/>
</dbReference>
<dbReference type="CDD" id="cd00315">
    <property type="entry name" value="Cyt_C5_DNA_methylase"/>
    <property type="match status" value="1"/>
</dbReference>
<dbReference type="CDD" id="cd00093">
    <property type="entry name" value="HTH_XRE"/>
    <property type="match status" value="1"/>
</dbReference>
<dbReference type="Gene3D" id="3.90.120.30">
    <property type="match status" value="1"/>
</dbReference>
<dbReference type="Gene3D" id="1.10.260.40">
    <property type="entry name" value="lambda repressor-like DNA-binding domains"/>
    <property type="match status" value="1"/>
</dbReference>
<dbReference type="Gene3D" id="3.40.50.150">
    <property type="entry name" value="Vaccinia Virus protein VP39"/>
    <property type="match status" value="1"/>
</dbReference>
<dbReference type="InterPro" id="IPR050750">
    <property type="entry name" value="C5-MTase"/>
</dbReference>
<dbReference type="InterPro" id="IPR018117">
    <property type="entry name" value="C5_DNA_meth_AS"/>
</dbReference>
<dbReference type="InterPro" id="IPR001525">
    <property type="entry name" value="C5_MeTfrase"/>
</dbReference>
<dbReference type="InterPro" id="IPR031303">
    <property type="entry name" value="C5_meth_CS"/>
</dbReference>
<dbReference type="InterPro" id="IPR001387">
    <property type="entry name" value="Cro/C1-type_HTH"/>
</dbReference>
<dbReference type="InterPro" id="IPR010982">
    <property type="entry name" value="Lambda_DNA-bd_dom_sf"/>
</dbReference>
<dbReference type="InterPro" id="IPR029063">
    <property type="entry name" value="SAM-dependent_MTases_sf"/>
</dbReference>
<dbReference type="NCBIfam" id="TIGR00675">
    <property type="entry name" value="dcm"/>
    <property type="match status" value="1"/>
</dbReference>
<dbReference type="PANTHER" id="PTHR46098">
    <property type="entry name" value="TRNA (CYTOSINE(38)-C(5))-METHYLTRANSFERASE"/>
    <property type="match status" value="1"/>
</dbReference>
<dbReference type="PANTHER" id="PTHR46098:SF1">
    <property type="entry name" value="TRNA (CYTOSINE(38)-C(5))-METHYLTRANSFERASE"/>
    <property type="match status" value="1"/>
</dbReference>
<dbReference type="Pfam" id="PF00145">
    <property type="entry name" value="DNA_methylase"/>
    <property type="match status" value="1"/>
</dbReference>
<dbReference type="Pfam" id="PF01381">
    <property type="entry name" value="HTH_3"/>
    <property type="match status" value="1"/>
</dbReference>
<dbReference type="PRINTS" id="PR00105">
    <property type="entry name" value="C5METTRFRASE"/>
</dbReference>
<dbReference type="SMART" id="SM00530">
    <property type="entry name" value="HTH_XRE"/>
    <property type="match status" value="1"/>
</dbReference>
<dbReference type="SUPFAM" id="SSF47413">
    <property type="entry name" value="lambda repressor-like DNA-binding domains"/>
    <property type="match status" value="1"/>
</dbReference>
<dbReference type="SUPFAM" id="SSF53335">
    <property type="entry name" value="S-adenosyl-L-methionine-dependent methyltransferases"/>
    <property type="match status" value="1"/>
</dbReference>
<dbReference type="PROSITE" id="PS00094">
    <property type="entry name" value="C5_MTASE_1"/>
    <property type="match status" value="1"/>
</dbReference>
<dbReference type="PROSITE" id="PS00095">
    <property type="entry name" value="C5_MTASE_2"/>
    <property type="match status" value="1"/>
</dbReference>
<dbReference type="PROSITE" id="PS50943">
    <property type="entry name" value="HTH_CROC1"/>
    <property type="match status" value="1"/>
</dbReference>
<dbReference type="PROSITE" id="PS51679">
    <property type="entry name" value="SAM_MT_C5"/>
    <property type="match status" value="1"/>
</dbReference>
<gene>
    <name type="primary">ssoIIM</name>
</gene>
<protein>
    <recommendedName>
        <fullName evidence="4">Type II methyltransferase M.SsoII</fullName>
        <shortName evidence="5">M.SsoII</shortName>
        <ecNumber>2.1.1.37</ecNumber>
    </recommendedName>
    <alternativeName>
        <fullName>Cytosine-specific methyltransferase SsoII</fullName>
    </alternativeName>
    <alternativeName>
        <fullName>Modification methylase SsoII</fullName>
    </alternativeName>
</protein>
<evidence type="ECO:0000255" key="1">
    <source>
        <dbReference type="PROSITE-ProRule" id="PRU00257"/>
    </source>
</evidence>
<evidence type="ECO:0000255" key="2">
    <source>
        <dbReference type="PROSITE-ProRule" id="PRU01016"/>
    </source>
</evidence>
<evidence type="ECO:0000255" key="3">
    <source>
        <dbReference type="PROSITE-ProRule" id="PRU10018"/>
    </source>
</evidence>
<evidence type="ECO:0000303" key="4">
    <source>
    </source>
</evidence>
<evidence type="ECO:0000303" key="5">
    <source>
    </source>
</evidence>
<accession>P34879</accession>
<sequence>MTDNIAATIKEKRERLHMTQKEFADALGLSKYGDRTIRRWERGETKPTGAELKAVIDFPDTPPYPNNENGRYRMIDLFAGIGGTRLGFHQTNAVNVVFSSEWDKFAQKTYHANYGDFPDGDITKIDEKDIPDHEILVGGFPCVAFSQAGLKKGFNDTRGTLFFDIARIIKEKKPHAFLLENVKNLLGHDKGRTFSIIKNTLEELNYTVYYNIFAAKDFGVPQNRERIYIVGFNKEKVRNHEHFTFPTPLKTKTRVGDILEKSVDNKYTLSDALWNGHQRRKLVNAAAGKGFGYGLFNENSPYTNTISARYYKDGSEILIEQKGSNPRKITPREASRLQGFPSDFIIPVSDTQAYKQFGNSVAVPVINAIAEKIISTLDS</sequence>
<name>MTS2_SHISO</name>
<keyword id="KW-0238">DNA-binding</keyword>
<keyword id="KW-0489">Methyltransferase</keyword>
<keyword id="KW-0614">Plasmid</keyword>
<keyword id="KW-0680">Restriction system</keyword>
<keyword id="KW-0949">S-adenosyl-L-methionine</keyword>
<keyword id="KW-0804">Transcription</keyword>
<keyword id="KW-0805">Transcription regulation</keyword>
<keyword id="KW-0808">Transferase</keyword>
<comment type="function">
    <text evidence="4">A methylase that recognizes the double-stranded sequence 5'-CCNGG-3', methylates C-2 on both strands, and protects the DNA from cleavage by the SsoII endonuclease.</text>
</comment>
<comment type="catalytic activity">
    <reaction evidence="3">
        <text>a 2'-deoxycytidine in DNA + S-adenosyl-L-methionine = a 5-methyl-2'-deoxycytidine in DNA + S-adenosyl-L-homocysteine + H(+)</text>
        <dbReference type="Rhea" id="RHEA:13681"/>
        <dbReference type="Rhea" id="RHEA-COMP:11369"/>
        <dbReference type="Rhea" id="RHEA-COMP:11370"/>
        <dbReference type="ChEBI" id="CHEBI:15378"/>
        <dbReference type="ChEBI" id="CHEBI:57856"/>
        <dbReference type="ChEBI" id="CHEBI:59789"/>
        <dbReference type="ChEBI" id="CHEBI:85452"/>
        <dbReference type="ChEBI" id="CHEBI:85454"/>
        <dbReference type="EC" id="2.1.1.37"/>
    </reaction>
</comment>
<comment type="similarity">
    <text evidence="2">Belongs to the class I-like SAM-binding methyltransferase superfamily. C5-methyltransferase family.</text>
</comment>
<organism>
    <name type="scientific">Shigella sonnei</name>
    <dbReference type="NCBI Taxonomy" id="624"/>
    <lineage>
        <taxon>Bacteria</taxon>
        <taxon>Pseudomonadati</taxon>
        <taxon>Pseudomonadota</taxon>
        <taxon>Gammaproteobacteria</taxon>
        <taxon>Enterobacterales</taxon>
        <taxon>Enterobacteriaceae</taxon>
        <taxon>Shigella</taxon>
    </lineage>
</organism>
<feature type="chain" id="PRO_0000087906" description="Type II methyltransferase M.SsoII">
    <location>
        <begin position="1"/>
        <end position="379"/>
    </location>
</feature>
<feature type="domain" description="HTH cro/C1-type" evidence="1">
    <location>
        <begin position="9"/>
        <end position="66"/>
    </location>
</feature>
<feature type="domain" description="SAM-dependent MTase C5-type" evidence="2">
    <location>
        <begin position="72"/>
        <end position="379"/>
    </location>
</feature>
<feature type="active site" evidence="2 3">
    <location>
        <position position="142"/>
    </location>
</feature>